<evidence type="ECO:0000250" key="1"/>
<evidence type="ECO:0000255" key="2">
    <source>
        <dbReference type="HAMAP-Rule" id="MF_00118"/>
    </source>
</evidence>
<proteinExistence type="inferred from homology"/>
<gene>
    <name evidence="2" type="primary">tuf</name>
    <name type="ordered locus">ABC0148</name>
</gene>
<organism>
    <name type="scientific">Shouchella clausii (strain KSM-K16)</name>
    <name type="common">Alkalihalobacillus clausii</name>
    <dbReference type="NCBI Taxonomy" id="66692"/>
    <lineage>
        <taxon>Bacteria</taxon>
        <taxon>Bacillati</taxon>
        <taxon>Bacillota</taxon>
        <taxon>Bacilli</taxon>
        <taxon>Bacillales</taxon>
        <taxon>Bacillaceae</taxon>
        <taxon>Shouchella</taxon>
    </lineage>
</organism>
<accession>Q5WLR4</accession>
<comment type="function">
    <text evidence="2">GTP hydrolase that promotes the GTP-dependent binding of aminoacyl-tRNA to the A-site of ribosomes during protein biosynthesis.</text>
</comment>
<comment type="catalytic activity">
    <reaction evidence="2">
        <text>GTP + H2O = GDP + phosphate + H(+)</text>
        <dbReference type="Rhea" id="RHEA:19669"/>
        <dbReference type="ChEBI" id="CHEBI:15377"/>
        <dbReference type="ChEBI" id="CHEBI:15378"/>
        <dbReference type="ChEBI" id="CHEBI:37565"/>
        <dbReference type="ChEBI" id="CHEBI:43474"/>
        <dbReference type="ChEBI" id="CHEBI:58189"/>
        <dbReference type="EC" id="3.6.5.3"/>
    </reaction>
    <physiologicalReaction direction="left-to-right" evidence="2">
        <dbReference type="Rhea" id="RHEA:19670"/>
    </physiologicalReaction>
</comment>
<comment type="subunit">
    <text evidence="2">Monomer.</text>
</comment>
<comment type="subcellular location">
    <subcellularLocation>
        <location evidence="2">Cytoplasm</location>
    </subcellularLocation>
</comment>
<comment type="similarity">
    <text evidence="2">Belongs to the TRAFAC class translation factor GTPase superfamily. Classic translation factor GTPase family. EF-Tu/EF-1A subfamily.</text>
</comment>
<sequence length="396" mass="43433">MAKEKFDRSKTHANIGTIGHVDHGKTTLTAAITTVLAKRSGKGQAMAYDAIDGAPEERERGITISTAHVEYETDSRHYAHVDCPGHADYVKNMITGAAQMDGGILVVSAADGPMPQTREHILLSRNVGVPYLVVFLNKCDMVDDEELLELVEMEVRDLLSEYDFPGDDVPVIQGSALKALQGEAEWEEKIIELMNAVDEYIPTPERDKDKPFMMPVEDVFSITGRGTVATGRVERGQLNVGDTVEILGINEEKKSTTVTGVEMFRKLLDYAEAGDNIGALLRGVSREEIQRGQVLAKPGTITPHTKFTAEVYVLSKDEGGRHTPFFSNYRPQFYFRTTDVTGVVHLPEGTEMVMPGDNTEMTVELIAPIAIEEGTRFSIREGGRTVGSGVVSTITE</sequence>
<feature type="chain" id="PRO_1000015610" description="Elongation factor Tu">
    <location>
        <begin position="1"/>
        <end position="396"/>
    </location>
</feature>
<feature type="domain" description="tr-type G">
    <location>
        <begin position="10"/>
        <end position="205"/>
    </location>
</feature>
<feature type="region of interest" description="G1" evidence="1">
    <location>
        <begin position="19"/>
        <end position="26"/>
    </location>
</feature>
<feature type="region of interest" description="G2" evidence="1">
    <location>
        <begin position="61"/>
        <end position="65"/>
    </location>
</feature>
<feature type="region of interest" description="G3" evidence="1">
    <location>
        <begin position="82"/>
        <end position="85"/>
    </location>
</feature>
<feature type="region of interest" description="G4" evidence="1">
    <location>
        <begin position="137"/>
        <end position="140"/>
    </location>
</feature>
<feature type="region of interest" description="G5" evidence="1">
    <location>
        <begin position="175"/>
        <end position="177"/>
    </location>
</feature>
<feature type="binding site" evidence="2">
    <location>
        <begin position="19"/>
        <end position="26"/>
    </location>
    <ligand>
        <name>GTP</name>
        <dbReference type="ChEBI" id="CHEBI:37565"/>
    </ligand>
</feature>
<feature type="binding site" evidence="2">
    <location>
        <position position="26"/>
    </location>
    <ligand>
        <name>Mg(2+)</name>
        <dbReference type="ChEBI" id="CHEBI:18420"/>
    </ligand>
</feature>
<feature type="binding site" evidence="2">
    <location>
        <begin position="82"/>
        <end position="86"/>
    </location>
    <ligand>
        <name>GTP</name>
        <dbReference type="ChEBI" id="CHEBI:37565"/>
    </ligand>
</feature>
<feature type="binding site" evidence="2">
    <location>
        <begin position="137"/>
        <end position="140"/>
    </location>
    <ligand>
        <name>GTP</name>
        <dbReference type="ChEBI" id="CHEBI:37565"/>
    </ligand>
</feature>
<reference key="1">
    <citation type="submission" date="2003-10" db="EMBL/GenBank/DDBJ databases">
        <title>The complete genome sequence of the alkaliphilic Bacillus clausii KSM-K16.</title>
        <authorList>
            <person name="Takaki Y."/>
            <person name="Kageyama Y."/>
            <person name="Shimamura S."/>
            <person name="Suzuki H."/>
            <person name="Nishi S."/>
            <person name="Hatada Y."/>
            <person name="Kawai S."/>
            <person name="Ito S."/>
            <person name="Horikoshi K."/>
        </authorList>
    </citation>
    <scope>NUCLEOTIDE SEQUENCE [LARGE SCALE GENOMIC DNA]</scope>
    <source>
        <strain>KSM-K16</strain>
    </source>
</reference>
<keyword id="KW-0963">Cytoplasm</keyword>
<keyword id="KW-0251">Elongation factor</keyword>
<keyword id="KW-0342">GTP-binding</keyword>
<keyword id="KW-0378">Hydrolase</keyword>
<keyword id="KW-0460">Magnesium</keyword>
<keyword id="KW-0479">Metal-binding</keyword>
<keyword id="KW-0547">Nucleotide-binding</keyword>
<keyword id="KW-0648">Protein biosynthesis</keyword>
<keyword id="KW-1185">Reference proteome</keyword>
<protein>
    <recommendedName>
        <fullName evidence="2">Elongation factor Tu</fullName>
        <shortName evidence="2">EF-Tu</shortName>
        <ecNumber evidence="2">3.6.5.3</ecNumber>
    </recommendedName>
</protein>
<name>EFTU_SHOC1</name>
<dbReference type="EC" id="3.6.5.3" evidence="2"/>
<dbReference type="EMBL" id="AP006627">
    <property type="protein sequence ID" value="BAD62691.1"/>
    <property type="molecule type" value="Genomic_DNA"/>
</dbReference>
<dbReference type="RefSeq" id="WP_011245012.1">
    <property type="nucleotide sequence ID" value="NC_006582.1"/>
</dbReference>
<dbReference type="SMR" id="Q5WLR4"/>
<dbReference type="STRING" id="66692.ABC0148"/>
<dbReference type="KEGG" id="bcl:ABC0148"/>
<dbReference type="eggNOG" id="COG0050">
    <property type="taxonomic scope" value="Bacteria"/>
</dbReference>
<dbReference type="HOGENOM" id="CLU_007265_0_1_9"/>
<dbReference type="OrthoDB" id="9804504at2"/>
<dbReference type="Proteomes" id="UP000001168">
    <property type="component" value="Chromosome"/>
</dbReference>
<dbReference type="GO" id="GO:0005829">
    <property type="term" value="C:cytosol"/>
    <property type="evidence" value="ECO:0007669"/>
    <property type="project" value="TreeGrafter"/>
</dbReference>
<dbReference type="GO" id="GO:0005525">
    <property type="term" value="F:GTP binding"/>
    <property type="evidence" value="ECO:0007669"/>
    <property type="project" value="UniProtKB-UniRule"/>
</dbReference>
<dbReference type="GO" id="GO:0003924">
    <property type="term" value="F:GTPase activity"/>
    <property type="evidence" value="ECO:0007669"/>
    <property type="project" value="InterPro"/>
</dbReference>
<dbReference type="GO" id="GO:0003746">
    <property type="term" value="F:translation elongation factor activity"/>
    <property type="evidence" value="ECO:0007669"/>
    <property type="project" value="UniProtKB-UniRule"/>
</dbReference>
<dbReference type="CDD" id="cd01884">
    <property type="entry name" value="EF_Tu"/>
    <property type="match status" value="1"/>
</dbReference>
<dbReference type="CDD" id="cd03697">
    <property type="entry name" value="EFTU_II"/>
    <property type="match status" value="1"/>
</dbReference>
<dbReference type="CDD" id="cd03707">
    <property type="entry name" value="EFTU_III"/>
    <property type="match status" value="1"/>
</dbReference>
<dbReference type="FunFam" id="2.40.30.10:FF:000001">
    <property type="entry name" value="Elongation factor Tu"/>
    <property type="match status" value="1"/>
</dbReference>
<dbReference type="FunFam" id="3.40.50.300:FF:000003">
    <property type="entry name" value="Elongation factor Tu"/>
    <property type="match status" value="1"/>
</dbReference>
<dbReference type="Gene3D" id="3.40.50.300">
    <property type="entry name" value="P-loop containing nucleotide triphosphate hydrolases"/>
    <property type="match status" value="1"/>
</dbReference>
<dbReference type="Gene3D" id="2.40.30.10">
    <property type="entry name" value="Translation factors"/>
    <property type="match status" value="2"/>
</dbReference>
<dbReference type="HAMAP" id="MF_00118_B">
    <property type="entry name" value="EF_Tu_B"/>
    <property type="match status" value="1"/>
</dbReference>
<dbReference type="InterPro" id="IPR041709">
    <property type="entry name" value="EF-Tu_GTP-bd"/>
</dbReference>
<dbReference type="InterPro" id="IPR050055">
    <property type="entry name" value="EF-Tu_GTPase"/>
</dbReference>
<dbReference type="InterPro" id="IPR004161">
    <property type="entry name" value="EFTu-like_2"/>
</dbReference>
<dbReference type="InterPro" id="IPR033720">
    <property type="entry name" value="EFTU_2"/>
</dbReference>
<dbReference type="InterPro" id="IPR031157">
    <property type="entry name" value="G_TR_CS"/>
</dbReference>
<dbReference type="InterPro" id="IPR027417">
    <property type="entry name" value="P-loop_NTPase"/>
</dbReference>
<dbReference type="InterPro" id="IPR005225">
    <property type="entry name" value="Small_GTP-bd"/>
</dbReference>
<dbReference type="InterPro" id="IPR000795">
    <property type="entry name" value="T_Tr_GTP-bd_dom"/>
</dbReference>
<dbReference type="InterPro" id="IPR009000">
    <property type="entry name" value="Transl_B-barrel_sf"/>
</dbReference>
<dbReference type="InterPro" id="IPR009001">
    <property type="entry name" value="Transl_elong_EF1A/Init_IF2_C"/>
</dbReference>
<dbReference type="InterPro" id="IPR004541">
    <property type="entry name" value="Transl_elong_EFTu/EF1A_bac/org"/>
</dbReference>
<dbReference type="InterPro" id="IPR004160">
    <property type="entry name" value="Transl_elong_EFTu/EF1A_C"/>
</dbReference>
<dbReference type="NCBIfam" id="TIGR00485">
    <property type="entry name" value="EF-Tu"/>
    <property type="match status" value="1"/>
</dbReference>
<dbReference type="NCBIfam" id="NF000766">
    <property type="entry name" value="PRK00049.1"/>
    <property type="match status" value="1"/>
</dbReference>
<dbReference type="NCBIfam" id="NF009372">
    <property type="entry name" value="PRK12735.1"/>
    <property type="match status" value="1"/>
</dbReference>
<dbReference type="NCBIfam" id="NF009373">
    <property type="entry name" value="PRK12736.1"/>
    <property type="match status" value="1"/>
</dbReference>
<dbReference type="NCBIfam" id="TIGR00231">
    <property type="entry name" value="small_GTP"/>
    <property type="match status" value="1"/>
</dbReference>
<dbReference type="PANTHER" id="PTHR43721:SF22">
    <property type="entry name" value="ELONGATION FACTOR TU, MITOCHONDRIAL"/>
    <property type="match status" value="1"/>
</dbReference>
<dbReference type="PANTHER" id="PTHR43721">
    <property type="entry name" value="ELONGATION FACTOR TU-RELATED"/>
    <property type="match status" value="1"/>
</dbReference>
<dbReference type="Pfam" id="PF00009">
    <property type="entry name" value="GTP_EFTU"/>
    <property type="match status" value="1"/>
</dbReference>
<dbReference type="Pfam" id="PF03144">
    <property type="entry name" value="GTP_EFTU_D2"/>
    <property type="match status" value="1"/>
</dbReference>
<dbReference type="Pfam" id="PF03143">
    <property type="entry name" value="GTP_EFTU_D3"/>
    <property type="match status" value="1"/>
</dbReference>
<dbReference type="PRINTS" id="PR00315">
    <property type="entry name" value="ELONGATNFCT"/>
</dbReference>
<dbReference type="SUPFAM" id="SSF50465">
    <property type="entry name" value="EF-Tu/eEF-1alpha/eIF2-gamma C-terminal domain"/>
    <property type="match status" value="1"/>
</dbReference>
<dbReference type="SUPFAM" id="SSF52540">
    <property type="entry name" value="P-loop containing nucleoside triphosphate hydrolases"/>
    <property type="match status" value="1"/>
</dbReference>
<dbReference type="SUPFAM" id="SSF50447">
    <property type="entry name" value="Translation proteins"/>
    <property type="match status" value="1"/>
</dbReference>
<dbReference type="PROSITE" id="PS00301">
    <property type="entry name" value="G_TR_1"/>
    <property type="match status" value="1"/>
</dbReference>
<dbReference type="PROSITE" id="PS51722">
    <property type="entry name" value="G_TR_2"/>
    <property type="match status" value="1"/>
</dbReference>